<protein>
    <recommendedName>
        <fullName evidence="4">Trifunctional purine biosynthetic protein adenosine-3</fullName>
    </recommendedName>
    <domain>
        <recommendedName>
            <fullName evidence="4">Phosphoribosylamine--glycine ligase</fullName>
            <ecNumber evidence="4">6.3.4.13</ecNumber>
        </recommendedName>
        <alternativeName>
            <fullName>Glycinamide ribonucleotide synthetase</fullName>
            <shortName>GARS</shortName>
        </alternativeName>
        <alternativeName>
            <fullName>Phosphoribosylglycinamide synthetase</fullName>
        </alternativeName>
    </domain>
    <domain>
        <recommendedName>
            <fullName evidence="4">Phosphoribosylformylglycinamidine cyclo-ligase</fullName>
            <ecNumber evidence="4">6.3.3.1</ecNumber>
        </recommendedName>
        <alternativeName>
            <fullName>AIR synthase</fullName>
            <shortName>AIRS</shortName>
        </alternativeName>
        <alternativeName>
            <fullName>Phosphoribosyl-aminoimidazole synthetase</fullName>
        </alternativeName>
    </domain>
    <domain>
        <recommendedName>
            <fullName evidence="4">Phosphoribosylglycinamide formyltransferase</fullName>
            <ecNumber evidence="4">2.1.2.2</ecNumber>
        </recommendedName>
        <alternativeName>
            <fullName>5'-phosphoribosylglycinamide transformylase</fullName>
        </alternativeName>
        <alternativeName>
            <fullName>GAR transformylase</fullName>
            <shortName>GART</shortName>
        </alternativeName>
    </domain>
</protein>
<gene>
    <name type="primary">Gart</name>
</gene>
<accession>Q64737</accession>
<accession>Q3TGI3</accession>
<accession>Q6NS48</accession>
<feature type="initiator methionine" description="Removed" evidence="4">
    <location>
        <position position="1"/>
    </location>
</feature>
<feature type="chain" id="PRO_0000074938" description="Trifunctional purine biosynthetic protein adenosine-3">
    <location>
        <begin position="2"/>
        <end position="1010"/>
    </location>
</feature>
<feature type="domain" description="ATP-grasp" evidence="5">
    <location>
        <begin position="111"/>
        <end position="318"/>
    </location>
</feature>
<feature type="region of interest" description="AIRS domain" evidence="3">
    <location>
        <begin position="434"/>
        <end position="809"/>
    </location>
</feature>
<feature type="region of interest" description="GART domain" evidence="4">
    <location>
        <begin position="810"/>
        <end position="1010"/>
    </location>
</feature>
<feature type="active site" description="Proton donor" evidence="1">
    <location>
        <position position="915"/>
    </location>
</feature>
<feature type="binding site" evidence="4">
    <location>
        <begin position="190"/>
        <end position="193"/>
    </location>
    <ligand>
        <name>ATP</name>
        <dbReference type="ChEBI" id="CHEBI:30616"/>
    </ligand>
</feature>
<feature type="binding site" evidence="4">
    <location>
        <position position="197"/>
    </location>
    <ligand>
        <name>ATP</name>
        <dbReference type="ChEBI" id="CHEBI:30616"/>
    </ligand>
</feature>
<feature type="binding site" evidence="4">
    <location>
        <position position="220"/>
    </location>
    <ligand>
        <name>ATP</name>
        <dbReference type="ChEBI" id="CHEBI:30616"/>
    </ligand>
</feature>
<feature type="binding site" evidence="4">
    <location>
        <position position="229"/>
    </location>
    <ligand>
        <name>ATP</name>
        <dbReference type="ChEBI" id="CHEBI:30616"/>
    </ligand>
</feature>
<feature type="binding site" evidence="5">
    <location>
        <position position="288"/>
    </location>
    <ligand>
        <name>Mg(2+)</name>
        <dbReference type="ChEBI" id="CHEBI:18420"/>
    </ligand>
</feature>
<feature type="binding site" evidence="5">
    <location>
        <position position="290"/>
    </location>
    <ligand>
        <name>Mg(2+)</name>
        <dbReference type="ChEBI" id="CHEBI:18420"/>
    </ligand>
</feature>
<feature type="binding site" evidence="4">
    <location>
        <begin position="818"/>
        <end position="820"/>
    </location>
    <ligand>
        <name>N(1)-(5-phospho-beta-D-ribosyl)glycinamide</name>
        <dbReference type="ChEBI" id="CHEBI:143788"/>
    </ligand>
</feature>
<feature type="binding site" evidence="4">
    <location>
        <position position="871"/>
    </location>
    <ligand>
        <name>(6R)-10-formyltetrahydrofolate</name>
        <dbReference type="ChEBI" id="CHEBI:195366"/>
    </ligand>
</feature>
<feature type="binding site" evidence="4">
    <location>
        <begin position="896"/>
        <end position="899"/>
    </location>
    <ligand>
        <name>(6R)-10-formyltetrahydrofolate</name>
        <dbReference type="ChEBI" id="CHEBI:195366"/>
    </ligand>
</feature>
<feature type="binding site" evidence="4">
    <location>
        <position position="913"/>
    </location>
    <ligand>
        <name>(6R)-10-formyltetrahydrofolate</name>
        <dbReference type="ChEBI" id="CHEBI:195366"/>
    </ligand>
</feature>
<feature type="binding site" evidence="4">
    <location>
        <begin position="947"/>
        <end position="951"/>
    </location>
    <ligand>
        <name>(6R)-10-formyltetrahydrofolate</name>
        <dbReference type="ChEBI" id="CHEBI:195366"/>
    </ligand>
</feature>
<feature type="binding site" evidence="4">
    <location>
        <begin position="977"/>
        <end position="980"/>
    </location>
    <ligand>
        <name>N(1)-(5-phospho-beta-D-ribosyl)glycinamide</name>
        <dbReference type="ChEBI" id="CHEBI:143788"/>
    </ligand>
</feature>
<feature type="site" description="Raises pKa of active site His" evidence="1">
    <location>
        <position position="951"/>
    </location>
</feature>
<feature type="modified residue" description="N-acetylalanine" evidence="4">
    <location>
        <position position="2"/>
    </location>
</feature>
<feature type="modified residue" description="Phosphoserine" evidence="4">
    <location>
        <position position="10"/>
    </location>
</feature>
<feature type="modified residue" description="N6-acetyllysine" evidence="4">
    <location>
        <position position="350"/>
    </location>
</feature>
<feature type="modified residue" description="Phosphoserine" evidence="9">
    <location>
        <position position="440"/>
    </location>
</feature>
<feature type="modified residue" description="Phosphoserine" evidence="9">
    <location>
        <position position="467"/>
    </location>
</feature>
<feature type="modified residue" description="Phosphothreonine" evidence="4">
    <location>
        <position position="682"/>
    </location>
</feature>
<feature type="splice variant" id="VSP_005518" description="In isoform Short." evidence="7">
    <location>
        <begin position="434"/>
        <end position="1010"/>
    </location>
</feature>
<feature type="sequence conflict" description="In Ref. 1; AAA19012/AAA19013 and 2; AAC53250/AAC53251." evidence="8" ref="1 2">
    <original>C</original>
    <variation>G</variation>
    <location>
        <position position="41"/>
    </location>
</feature>
<feature type="sequence conflict" description="In Ref. 2; AAC53250/AAC53251." evidence="8" ref="2">
    <original>D</original>
    <variation>G</variation>
    <location>
        <position position="318"/>
    </location>
</feature>
<feature type="sequence conflict" description="In Ref. 1; AAA19013." evidence="8" ref="1">
    <original>G</original>
    <variation>A</variation>
    <location>
        <position position="563"/>
    </location>
</feature>
<feature type="sequence conflict" description="In Ref. 1; AAA19013." evidence="8" ref="1">
    <original>I</original>
    <variation>T</variation>
    <location>
        <position position="690"/>
    </location>
</feature>
<feature type="sequence conflict" description="In Ref. 1; AAA19013." evidence="8" ref="1">
    <original>Y</original>
    <variation>S</variation>
    <location>
        <position position="868"/>
    </location>
</feature>
<proteinExistence type="evidence at protein level"/>
<comment type="function">
    <text evidence="4">Trifunctional enzyme that catalyzes three distinct reactions as part of the 'de novo' inosine monophosphate biosynthetic pathway.</text>
</comment>
<comment type="catalytic activity">
    <reaction evidence="4">
        <text>5-phospho-beta-D-ribosylamine + glycine + ATP = N(1)-(5-phospho-beta-D-ribosyl)glycinamide + ADP + phosphate + H(+)</text>
        <dbReference type="Rhea" id="RHEA:17453"/>
        <dbReference type="ChEBI" id="CHEBI:15378"/>
        <dbReference type="ChEBI" id="CHEBI:30616"/>
        <dbReference type="ChEBI" id="CHEBI:43474"/>
        <dbReference type="ChEBI" id="CHEBI:57305"/>
        <dbReference type="ChEBI" id="CHEBI:58681"/>
        <dbReference type="ChEBI" id="CHEBI:143788"/>
        <dbReference type="ChEBI" id="CHEBI:456216"/>
        <dbReference type="EC" id="6.3.4.13"/>
    </reaction>
    <physiologicalReaction direction="left-to-right" evidence="4">
        <dbReference type="Rhea" id="RHEA:17454"/>
    </physiologicalReaction>
</comment>
<comment type="catalytic activity">
    <reaction evidence="4">
        <text>2-formamido-N(1)-(5-O-phospho-beta-D-ribosyl)acetamidine + ATP = 5-amino-1-(5-phospho-beta-D-ribosyl)imidazole + ADP + phosphate + H(+)</text>
        <dbReference type="Rhea" id="RHEA:23032"/>
        <dbReference type="ChEBI" id="CHEBI:15378"/>
        <dbReference type="ChEBI" id="CHEBI:30616"/>
        <dbReference type="ChEBI" id="CHEBI:43474"/>
        <dbReference type="ChEBI" id="CHEBI:137981"/>
        <dbReference type="ChEBI" id="CHEBI:147287"/>
        <dbReference type="ChEBI" id="CHEBI:456216"/>
        <dbReference type="EC" id="6.3.3.1"/>
    </reaction>
    <physiologicalReaction direction="left-to-right" evidence="4">
        <dbReference type="Rhea" id="RHEA:23033"/>
    </physiologicalReaction>
</comment>
<comment type="catalytic activity">
    <reaction evidence="4">
        <text>N(1)-(5-phospho-beta-D-ribosyl)glycinamide + (6R)-10-formyltetrahydrofolate = N(2)-formyl-N(1)-(5-phospho-beta-D-ribosyl)glycinamide + (6S)-5,6,7,8-tetrahydrofolate + H(+)</text>
        <dbReference type="Rhea" id="RHEA:15053"/>
        <dbReference type="ChEBI" id="CHEBI:15378"/>
        <dbReference type="ChEBI" id="CHEBI:57453"/>
        <dbReference type="ChEBI" id="CHEBI:143788"/>
        <dbReference type="ChEBI" id="CHEBI:147286"/>
        <dbReference type="ChEBI" id="CHEBI:195366"/>
        <dbReference type="EC" id="2.1.2.2"/>
    </reaction>
    <physiologicalReaction direction="left-to-right" evidence="4">
        <dbReference type="Rhea" id="RHEA:15054"/>
    </physiologicalReaction>
</comment>
<comment type="cofactor">
    <cofactor evidence="2 5">
        <name>Mg(2+)</name>
        <dbReference type="ChEBI" id="CHEBI:18420"/>
    </cofactor>
    <cofactor evidence="5">
        <name>Mn(2+)</name>
        <dbReference type="ChEBI" id="CHEBI:29035"/>
    </cofactor>
    <text evidence="5">Binds 1 magnesium or manganese ion per subunit.</text>
</comment>
<comment type="pathway">
    <text evidence="4">Purine metabolism; IMP biosynthesis via de novo pathway; 5-amino-1-(5-phospho-D-ribosyl)imidazole from N(2)-formyl-N(1)-(5-phospho-D-ribosyl)glycinamide: step 2/2.</text>
</comment>
<comment type="pathway">
    <text evidence="4">Purine metabolism; IMP biosynthesis via de novo pathway; N(1)-(5-phospho-D-ribosyl)glycinamide from 5-phospho-alpha-D-ribose 1-diphosphate: step 2/2.</text>
</comment>
<comment type="pathway">
    <text evidence="4">Purine metabolism; IMP biosynthesis via de novo pathway; N(2)-formyl-N(1)-(5-phospho-D-ribosyl)glycinamide from N(1)-(5-phospho-D-ribosyl)glycinamide (10-formyl THF route): step 1/1.</text>
</comment>
<comment type="subunit">
    <text evidence="4">Homodimer.</text>
</comment>
<comment type="alternative products">
    <event type="alternative splicing"/>
    <isoform>
        <id>Q64737-1</id>
        <name>Long</name>
        <sequence type="displayed"/>
    </isoform>
    <isoform>
        <id>Q64737-2</id>
        <name>Short</name>
        <sequence type="described" ref="VSP_005518"/>
    </isoform>
</comment>
<comment type="tissue specificity">
    <text evidence="6">Detected in liver, kidney and brain.</text>
</comment>
<comment type="domain">
    <text evidence="4">The N-terminal ATP-grasp domain carries the phosphoribosylamine--glycine ligase activity.</text>
</comment>
<comment type="domain">
    <text evidence="4">The central AIRS domain carries the phosphoribosylformylglycinamidine cyclo-ligase activity.</text>
</comment>
<comment type="domain">
    <text evidence="4">The C-terminal GART domain carries the phosphoribosylglycinamide formyltransferase activity.</text>
</comment>
<comment type="similarity">
    <text evidence="8">In the N-terminal section; belongs to the GARS family.</text>
</comment>
<comment type="similarity">
    <text evidence="8">In the central section; belongs to the AIR synthase family.</text>
</comment>
<comment type="similarity">
    <text evidence="8">In the C-terminal section; belongs to the GART family.</text>
</comment>
<evidence type="ECO:0000250" key="1">
    <source>
        <dbReference type="UniProtKB" id="P08179"/>
    </source>
</evidence>
<evidence type="ECO:0000250" key="2">
    <source>
        <dbReference type="UniProtKB" id="P15640"/>
    </source>
</evidence>
<evidence type="ECO:0000250" key="3">
    <source>
        <dbReference type="UniProtKB" id="P21872"/>
    </source>
</evidence>
<evidence type="ECO:0000250" key="4">
    <source>
        <dbReference type="UniProtKB" id="P22102"/>
    </source>
</evidence>
<evidence type="ECO:0000255" key="5">
    <source>
        <dbReference type="PROSITE-ProRule" id="PRU00409"/>
    </source>
</evidence>
<evidence type="ECO:0000269" key="6">
    <source>
    </source>
</evidence>
<evidence type="ECO:0000303" key="7">
    <source>
    </source>
</evidence>
<evidence type="ECO:0000305" key="8"/>
<evidence type="ECO:0007744" key="9">
    <source>
    </source>
</evidence>
<keyword id="KW-0007">Acetylation</keyword>
<keyword id="KW-0025">Alternative splicing</keyword>
<keyword id="KW-0067">ATP-binding</keyword>
<keyword id="KW-0436">Ligase</keyword>
<keyword id="KW-0460">Magnesium</keyword>
<keyword id="KW-0464">Manganese</keyword>
<keyword id="KW-0479">Metal-binding</keyword>
<keyword id="KW-0511">Multifunctional enzyme</keyword>
<keyword id="KW-0547">Nucleotide-binding</keyword>
<keyword id="KW-0597">Phosphoprotein</keyword>
<keyword id="KW-0658">Purine biosynthesis</keyword>
<keyword id="KW-1185">Reference proteome</keyword>
<keyword id="KW-0808">Transferase</keyword>
<organism>
    <name type="scientific">Mus musculus</name>
    <name type="common">Mouse</name>
    <dbReference type="NCBI Taxonomy" id="10090"/>
    <lineage>
        <taxon>Eukaryota</taxon>
        <taxon>Metazoa</taxon>
        <taxon>Chordata</taxon>
        <taxon>Craniata</taxon>
        <taxon>Vertebrata</taxon>
        <taxon>Euteleostomi</taxon>
        <taxon>Mammalia</taxon>
        <taxon>Eutheria</taxon>
        <taxon>Euarchontoglires</taxon>
        <taxon>Glires</taxon>
        <taxon>Rodentia</taxon>
        <taxon>Myomorpha</taxon>
        <taxon>Muroidea</taxon>
        <taxon>Muridae</taxon>
        <taxon>Murinae</taxon>
        <taxon>Mus</taxon>
        <taxon>Mus</taxon>
    </lineage>
</organism>
<sequence length="1010" mass="107503">MAARVLVIGSGGREHTLAWKLAQSPQVKQVLVAPGNAGTACAGKISNAAVSVNDHSALAQFCKDEKIELVVVGPEAPLAAGIVGDLTSAGVRCFGPTAQAAQLESSKKFAKEFMDRHEIPTAQWRAFTNPEDACSFITSANFPALVVKASGLAAGKGVIVAKSQAEACRAVQEIMQEKSFGAAGETVVVEEFLEGEEVSCLCFTDGKTVAEMPPAQDHKRLLDGDEGPNTGGMGAYCPAPQVSKDLLVKIKNTILQRAVDGMQQEGAPYTGILYAGIMLTKDGPKVLEFNCRFGDPECQVILPLLKSDLYEVMQSTLDGLLSASLPVWLENHSAVTVVMASKGYPGAYTKGVEITGFPEAQALGLQVFHAGTALKDGKVVTSGGRVLTVTAVQENLMSALAEARKGLAALKFEGAIYRKDIGFRAVAFLQRPRGLTYKDSGVDIAAGNMLVKKIQPLAKATSRPGCSVDLGGFAGLFDLKAAGFKDPLLASGTDGVGTKLKIAQLCNKHDSIGQDLVAMCVNDILAQGAEPLFFLDYFSCGKLDLSTTEAVIAGIAAACQQAGCALLGGETAEMPNMYPPGEYDLAGFAVGAMERHQKLPQLERITEGDAVIGVASSGLHSNGFSLVRKIVERSSLQYSSPAPGGCGDQTLGDLLLTPTRIYSHSLLPIIRSGRVKAFAHITGGGLLENIPRVLPQKFGVDLDASTWRVPKVFSWLQQEGELSEEEMARTFNCGIGAALVVSKDQAEQVLHDVRRRQEEAWVIGSVVACPEDSPRVRVKNLIETIQTNGSLVANGFLKSNFPVQQKKARVAVLISGTGSNLQALIDSTRDPKSSSHIVLVISNKAAVAGLDRAERAGIPTRVINHKLYKNRVEFDNAVDHVLEEFSVDIVCLAGFMRILSGPFVRKWDGKMLNIHPSLLPSFKGSNAHEQVLEAGVTITGCTVHFVAEDVDAGQIILQEAVPVRRGDTVATLSERVKVAEHKIFPAALQLVASGAVQLREDGKIHWAKEQ</sequence>
<reference key="1">
    <citation type="journal article" date="1993" name="Gene">
        <title>Mouse cDNAs encoding a trifunctional protein of de novo purine synthesis and a related single-domain glycinamide ribonucleotide synthetase.</title>
        <authorList>
            <person name="Kan J.L."/>
            <person name="Jannatipour M."/>
            <person name="Taylor S.M."/>
            <person name="Moran R.G."/>
        </authorList>
    </citation>
    <scope>NUCLEOTIDE SEQUENCE [MRNA] (ISOFORMS LONG AND SHORT)</scope>
    <source>
        <strain>C57BL/6 X CBA</strain>
        <tissue>Spleen</tissue>
    </source>
</reference>
<reference key="2">
    <citation type="journal article" date="1995" name="J. Biol. Chem.">
        <title>Analysis of a mouse gene encoding three steps of purine synthesis reveals use of an intronic polyadenylation signal without alternative exon usage.</title>
        <authorList>
            <person name="Kan J.L."/>
            <person name="Moran R.G."/>
        </authorList>
    </citation>
    <scope>NUCLEOTIDE SEQUENCE [GENOMIC DNA]</scope>
    <scope>ALTERNATIVE SPLICING</scope>
    <scope>TISSUE SPECIFICITY</scope>
</reference>
<reference key="3">
    <citation type="journal article" date="2005" name="Science">
        <title>The transcriptional landscape of the mammalian genome.</title>
        <authorList>
            <person name="Carninci P."/>
            <person name="Kasukawa T."/>
            <person name="Katayama S."/>
            <person name="Gough J."/>
            <person name="Frith M.C."/>
            <person name="Maeda N."/>
            <person name="Oyama R."/>
            <person name="Ravasi T."/>
            <person name="Lenhard B."/>
            <person name="Wells C."/>
            <person name="Kodzius R."/>
            <person name="Shimokawa K."/>
            <person name="Bajic V.B."/>
            <person name="Brenner S.E."/>
            <person name="Batalov S."/>
            <person name="Forrest A.R."/>
            <person name="Zavolan M."/>
            <person name="Davis M.J."/>
            <person name="Wilming L.G."/>
            <person name="Aidinis V."/>
            <person name="Allen J.E."/>
            <person name="Ambesi-Impiombato A."/>
            <person name="Apweiler R."/>
            <person name="Aturaliya R.N."/>
            <person name="Bailey T.L."/>
            <person name="Bansal M."/>
            <person name="Baxter L."/>
            <person name="Beisel K.W."/>
            <person name="Bersano T."/>
            <person name="Bono H."/>
            <person name="Chalk A.M."/>
            <person name="Chiu K.P."/>
            <person name="Choudhary V."/>
            <person name="Christoffels A."/>
            <person name="Clutterbuck D.R."/>
            <person name="Crowe M.L."/>
            <person name="Dalla E."/>
            <person name="Dalrymple B.P."/>
            <person name="de Bono B."/>
            <person name="Della Gatta G."/>
            <person name="di Bernardo D."/>
            <person name="Down T."/>
            <person name="Engstrom P."/>
            <person name="Fagiolini M."/>
            <person name="Faulkner G."/>
            <person name="Fletcher C.F."/>
            <person name="Fukushima T."/>
            <person name="Furuno M."/>
            <person name="Futaki S."/>
            <person name="Gariboldi M."/>
            <person name="Georgii-Hemming P."/>
            <person name="Gingeras T.R."/>
            <person name="Gojobori T."/>
            <person name="Green R.E."/>
            <person name="Gustincich S."/>
            <person name="Harbers M."/>
            <person name="Hayashi Y."/>
            <person name="Hensch T.K."/>
            <person name="Hirokawa N."/>
            <person name="Hill D."/>
            <person name="Huminiecki L."/>
            <person name="Iacono M."/>
            <person name="Ikeo K."/>
            <person name="Iwama A."/>
            <person name="Ishikawa T."/>
            <person name="Jakt M."/>
            <person name="Kanapin A."/>
            <person name="Katoh M."/>
            <person name="Kawasawa Y."/>
            <person name="Kelso J."/>
            <person name="Kitamura H."/>
            <person name="Kitano H."/>
            <person name="Kollias G."/>
            <person name="Krishnan S.P."/>
            <person name="Kruger A."/>
            <person name="Kummerfeld S.K."/>
            <person name="Kurochkin I.V."/>
            <person name="Lareau L.F."/>
            <person name="Lazarevic D."/>
            <person name="Lipovich L."/>
            <person name="Liu J."/>
            <person name="Liuni S."/>
            <person name="McWilliam S."/>
            <person name="Madan Babu M."/>
            <person name="Madera M."/>
            <person name="Marchionni L."/>
            <person name="Matsuda H."/>
            <person name="Matsuzawa S."/>
            <person name="Miki H."/>
            <person name="Mignone F."/>
            <person name="Miyake S."/>
            <person name="Morris K."/>
            <person name="Mottagui-Tabar S."/>
            <person name="Mulder N."/>
            <person name="Nakano N."/>
            <person name="Nakauchi H."/>
            <person name="Ng P."/>
            <person name="Nilsson R."/>
            <person name="Nishiguchi S."/>
            <person name="Nishikawa S."/>
            <person name="Nori F."/>
            <person name="Ohara O."/>
            <person name="Okazaki Y."/>
            <person name="Orlando V."/>
            <person name="Pang K.C."/>
            <person name="Pavan W.J."/>
            <person name="Pavesi G."/>
            <person name="Pesole G."/>
            <person name="Petrovsky N."/>
            <person name="Piazza S."/>
            <person name="Reed J."/>
            <person name="Reid J.F."/>
            <person name="Ring B.Z."/>
            <person name="Ringwald M."/>
            <person name="Rost B."/>
            <person name="Ruan Y."/>
            <person name="Salzberg S.L."/>
            <person name="Sandelin A."/>
            <person name="Schneider C."/>
            <person name="Schoenbach C."/>
            <person name="Sekiguchi K."/>
            <person name="Semple C.A."/>
            <person name="Seno S."/>
            <person name="Sessa L."/>
            <person name="Sheng Y."/>
            <person name="Shibata Y."/>
            <person name="Shimada H."/>
            <person name="Shimada K."/>
            <person name="Silva D."/>
            <person name="Sinclair B."/>
            <person name="Sperling S."/>
            <person name="Stupka E."/>
            <person name="Sugiura K."/>
            <person name="Sultana R."/>
            <person name="Takenaka Y."/>
            <person name="Taki K."/>
            <person name="Tammoja K."/>
            <person name="Tan S.L."/>
            <person name="Tang S."/>
            <person name="Taylor M.S."/>
            <person name="Tegner J."/>
            <person name="Teichmann S.A."/>
            <person name="Ueda H.R."/>
            <person name="van Nimwegen E."/>
            <person name="Verardo R."/>
            <person name="Wei C.L."/>
            <person name="Yagi K."/>
            <person name="Yamanishi H."/>
            <person name="Zabarovsky E."/>
            <person name="Zhu S."/>
            <person name="Zimmer A."/>
            <person name="Hide W."/>
            <person name="Bult C."/>
            <person name="Grimmond S.M."/>
            <person name="Teasdale R.D."/>
            <person name="Liu E.T."/>
            <person name="Brusic V."/>
            <person name="Quackenbush J."/>
            <person name="Wahlestedt C."/>
            <person name="Mattick J.S."/>
            <person name="Hume D.A."/>
            <person name="Kai C."/>
            <person name="Sasaki D."/>
            <person name="Tomaru Y."/>
            <person name="Fukuda S."/>
            <person name="Kanamori-Katayama M."/>
            <person name="Suzuki M."/>
            <person name="Aoki J."/>
            <person name="Arakawa T."/>
            <person name="Iida J."/>
            <person name="Imamura K."/>
            <person name="Itoh M."/>
            <person name="Kato T."/>
            <person name="Kawaji H."/>
            <person name="Kawagashira N."/>
            <person name="Kawashima T."/>
            <person name="Kojima M."/>
            <person name="Kondo S."/>
            <person name="Konno H."/>
            <person name="Nakano K."/>
            <person name="Ninomiya N."/>
            <person name="Nishio T."/>
            <person name="Okada M."/>
            <person name="Plessy C."/>
            <person name="Shibata K."/>
            <person name="Shiraki T."/>
            <person name="Suzuki S."/>
            <person name="Tagami M."/>
            <person name="Waki K."/>
            <person name="Watahiki A."/>
            <person name="Okamura-Oho Y."/>
            <person name="Suzuki H."/>
            <person name="Kawai J."/>
            <person name="Hayashizaki Y."/>
        </authorList>
    </citation>
    <scope>NUCLEOTIDE SEQUENCE [LARGE SCALE MRNA]</scope>
    <source>
        <strain>C57BL/6J</strain>
        <tissue>Kidney</tissue>
        <tissue>Liver</tissue>
        <tissue>Stomach</tissue>
    </source>
</reference>
<reference key="4">
    <citation type="submission" date="2005-09" db="EMBL/GenBank/DDBJ databases">
        <authorList>
            <person name="Mural R.J."/>
            <person name="Adams M.D."/>
            <person name="Myers E.W."/>
            <person name="Smith H.O."/>
            <person name="Venter J.C."/>
        </authorList>
    </citation>
    <scope>NUCLEOTIDE SEQUENCE [LARGE SCALE GENOMIC DNA]</scope>
</reference>
<reference key="5">
    <citation type="journal article" date="2004" name="Genome Res.">
        <title>The status, quality, and expansion of the NIH full-length cDNA project: the Mammalian Gene Collection (MGC).</title>
        <authorList>
            <consortium name="The MGC Project Team"/>
        </authorList>
    </citation>
    <scope>NUCLEOTIDE SEQUENCE [LARGE SCALE MRNA] (ISOFORM LONG)</scope>
    <source>
        <strain>C57BL/6J</strain>
        <tissue>Eye</tissue>
    </source>
</reference>
<reference key="6">
    <citation type="journal article" date="2010" name="Cell">
        <title>A tissue-specific atlas of mouse protein phosphorylation and expression.</title>
        <authorList>
            <person name="Huttlin E.L."/>
            <person name="Jedrychowski M.P."/>
            <person name="Elias J.E."/>
            <person name="Goswami T."/>
            <person name="Rad R."/>
            <person name="Beausoleil S.A."/>
            <person name="Villen J."/>
            <person name="Haas W."/>
            <person name="Sowa M.E."/>
            <person name="Gygi S.P."/>
        </authorList>
    </citation>
    <scope>PHOSPHORYLATION [LARGE SCALE ANALYSIS] AT SER-440 AND SER-467</scope>
    <scope>IDENTIFICATION BY MASS SPECTROMETRY [LARGE SCALE ANALYSIS]</scope>
    <source>
        <tissue>Brain</tissue>
        <tissue>Brown adipose tissue</tissue>
        <tissue>Heart</tissue>
        <tissue>Kidney</tissue>
        <tissue>Liver</tissue>
        <tissue>Lung</tissue>
        <tissue>Pancreas</tissue>
        <tissue>Spleen</tissue>
        <tissue>Testis</tissue>
    </source>
</reference>
<dbReference type="EC" id="6.3.4.13" evidence="4"/>
<dbReference type="EC" id="6.3.3.1" evidence="4"/>
<dbReference type="EC" id="2.1.2.2" evidence="4"/>
<dbReference type="EMBL" id="U01023">
    <property type="protein sequence ID" value="AAA19012.1"/>
    <property type="molecule type" value="mRNA"/>
</dbReference>
<dbReference type="EMBL" id="U01024">
    <property type="protein sequence ID" value="AAA19013.1"/>
    <property type="molecule type" value="mRNA"/>
</dbReference>
<dbReference type="EMBL" id="U20886">
    <property type="protein sequence ID" value="AAC53250.1"/>
    <property type="molecule type" value="Genomic_DNA"/>
</dbReference>
<dbReference type="EMBL" id="U20875">
    <property type="protein sequence ID" value="AAC53250.1"/>
    <property type="status" value="JOINED"/>
    <property type="molecule type" value="Genomic_DNA"/>
</dbReference>
<dbReference type="EMBL" id="U20876">
    <property type="protein sequence ID" value="AAC53250.1"/>
    <property type="status" value="JOINED"/>
    <property type="molecule type" value="Genomic_DNA"/>
</dbReference>
<dbReference type="EMBL" id="U20877">
    <property type="protein sequence ID" value="AAC53250.1"/>
    <property type="status" value="JOINED"/>
    <property type="molecule type" value="Genomic_DNA"/>
</dbReference>
<dbReference type="EMBL" id="U20879">
    <property type="protein sequence ID" value="AAC53250.1"/>
    <property type="status" value="JOINED"/>
    <property type="molecule type" value="Genomic_DNA"/>
</dbReference>
<dbReference type="EMBL" id="U20880">
    <property type="protein sequence ID" value="AAC53250.1"/>
    <property type="status" value="JOINED"/>
    <property type="molecule type" value="Genomic_DNA"/>
</dbReference>
<dbReference type="EMBL" id="U20881">
    <property type="protein sequence ID" value="AAC53250.1"/>
    <property type="status" value="JOINED"/>
    <property type="molecule type" value="Genomic_DNA"/>
</dbReference>
<dbReference type="EMBL" id="U20882">
    <property type="protein sequence ID" value="AAC53250.1"/>
    <property type="status" value="JOINED"/>
    <property type="molecule type" value="Genomic_DNA"/>
</dbReference>
<dbReference type="EMBL" id="U20883">
    <property type="protein sequence ID" value="AAC53250.1"/>
    <property type="status" value="JOINED"/>
    <property type="molecule type" value="Genomic_DNA"/>
</dbReference>
<dbReference type="EMBL" id="U20892">
    <property type="protein sequence ID" value="AAC53251.1"/>
    <property type="molecule type" value="Genomic_DNA"/>
</dbReference>
<dbReference type="EMBL" id="U20875">
    <property type="protein sequence ID" value="AAC53251.1"/>
    <property type="status" value="JOINED"/>
    <property type="molecule type" value="Genomic_DNA"/>
</dbReference>
<dbReference type="EMBL" id="U20876">
    <property type="protein sequence ID" value="AAC53251.1"/>
    <property type="status" value="JOINED"/>
    <property type="molecule type" value="Genomic_DNA"/>
</dbReference>
<dbReference type="EMBL" id="U20877">
    <property type="protein sequence ID" value="AAC53251.1"/>
    <property type="status" value="JOINED"/>
    <property type="molecule type" value="Genomic_DNA"/>
</dbReference>
<dbReference type="EMBL" id="U20879">
    <property type="protein sequence ID" value="AAC53251.1"/>
    <property type="status" value="JOINED"/>
    <property type="molecule type" value="Genomic_DNA"/>
</dbReference>
<dbReference type="EMBL" id="U20880">
    <property type="protein sequence ID" value="AAC53251.1"/>
    <property type="status" value="JOINED"/>
    <property type="molecule type" value="Genomic_DNA"/>
</dbReference>
<dbReference type="EMBL" id="U20881">
    <property type="protein sequence ID" value="AAC53251.1"/>
    <property type="status" value="JOINED"/>
    <property type="molecule type" value="Genomic_DNA"/>
</dbReference>
<dbReference type="EMBL" id="U20882">
    <property type="protein sequence ID" value="AAC53251.1"/>
    <property type="status" value="JOINED"/>
    <property type="molecule type" value="Genomic_DNA"/>
</dbReference>
<dbReference type="EMBL" id="U20883">
    <property type="protein sequence ID" value="AAC53251.1"/>
    <property type="status" value="JOINED"/>
    <property type="molecule type" value="Genomic_DNA"/>
</dbReference>
<dbReference type="EMBL" id="U20886">
    <property type="protein sequence ID" value="AAC53251.1"/>
    <property type="status" value="JOINED"/>
    <property type="molecule type" value="Genomic_DNA"/>
</dbReference>
<dbReference type="EMBL" id="U20884">
    <property type="protein sequence ID" value="AAC53251.1"/>
    <property type="status" value="JOINED"/>
    <property type="molecule type" value="Genomic_DNA"/>
</dbReference>
<dbReference type="EMBL" id="U20887">
    <property type="protein sequence ID" value="AAC53251.1"/>
    <property type="status" value="JOINED"/>
    <property type="molecule type" value="Genomic_DNA"/>
</dbReference>
<dbReference type="EMBL" id="U20885">
    <property type="protein sequence ID" value="AAC53251.1"/>
    <property type="status" value="JOINED"/>
    <property type="molecule type" value="Genomic_DNA"/>
</dbReference>
<dbReference type="EMBL" id="U20889">
    <property type="protein sequence ID" value="AAC53251.1"/>
    <property type="status" value="JOINED"/>
    <property type="molecule type" value="Genomic_DNA"/>
</dbReference>
<dbReference type="EMBL" id="U20890">
    <property type="protein sequence ID" value="AAC53251.1"/>
    <property type="status" value="JOINED"/>
    <property type="molecule type" value="Genomic_DNA"/>
</dbReference>
<dbReference type="EMBL" id="U20891">
    <property type="protein sequence ID" value="AAC53251.1"/>
    <property type="status" value="JOINED"/>
    <property type="molecule type" value="Genomic_DNA"/>
</dbReference>
<dbReference type="EMBL" id="AK168501">
    <property type="protein sequence ID" value="BAE40386.1"/>
    <property type="molecule type" value="mRNA"/>
</dbReference>
<dbReference type="EMBL" id="AK168724">
    <property type="protein sequence ID" value="BAE40565.1"/>
    <property type="molecule type" value="mRNA"/>
</dbReference>
<dbReference type="EMBL" id="AK168796">
    <property type="protein sequence ID" value="BAE40629.1"/>
    <property type="molecule type" value="mRNA"/>
</dbReference>
<dbReference type="EMBL" id="AK168864">
    <property type="protein sequence ID" value="BAE40683.1"/>
    <property type="molecule type" value="mRNA"/>
</dbReference>
<dbReference type="EMBL" id="AK168876">
    <property type="protein sequence ID" value="BAE40694.1"/>
    <property type="molecule type" value="mRNA"/>
</dbReference>
<dbReference type="EMBL" id="CH466602">
    <property type="protein sequence ID" value="EDL03819.1"/>
    <property type="molecule type" value="Genomic_DNA"/>
</dbReference>
<dbReference type="EMBL" id="BC070465">
    <property type="protein sequence ID" value="AAH70465.1"/>
    <property type="molecule type" value="mRNA"/>
</dbReference>
<dbReference type="CCDS" id="CCDS28329.1">
    <molecule id="Q64737-1"/>
</dbReference>
<dbReference type="PIR" id="I67805">
    <property type="entry name" value="I67805"/>
</dbReference>
<dbReference type="RefSeq" id="NP_001344280.1">
    <molecule id="Q64737-1"/>
    <property type="nucleotide sequence ID" value="NM_001357351.2"/>
</dbReference>
<dbReference type="RefSeq" id="NP_001412023.1">
    <molecule id="Q64737-1"/>
    <property type="nucleotide sequence ID" value="NM_001425094.1"/>
</dbReference>
<dbReference type="RefSeq" id="NP_001412024.1">
    <molecule id="Q64737-1"/>
    <property type="nucleotide sequence ID" value="NM_001425095.1"/>
</dbReference>
<dbReference type="RefSeq" id="NP_034386.2">
    <molecule id="Q64737-1"/>
    <property type="nucleotide sequence ID" value="NM_010256.3"/>
</dbReference>
<dbReference type="RefSeq" id="XP_006522973.1">
    <property type="nucleotide sequence ID" value="XM_006522910.3"/>
</dbReference>
<dbReference type="RefSeq" id="XP_006522974.1">
    <property type="nucleotide sequence ID" value="XM_006522911.2"/>
</dbReference>
<dbReference type="RefSeq" id="XP_006522975.1">
    <property type="nucleotide sequence ID" value="XM_006522912.1"/>
</dbReference>
<dbReference type="SMR" id="Q64737"/>
<dbReference type="BioGRID" id="199831">
    <property type="interactions" value="6"/>
</dbReference>
<dbReference type="FunCoup" id="Q64737">
    <property type="interactions" value="2989"/>
</dbReference>
<dbReference type="STRING" id="10090.ENSMUSP00000023684"/>
<dbReference type="BindingDB" id="Q64737"/>
<dbReference type="ChEMBL" id="CHEMBL3690"/>
<dbReference type="DrugCentral" id="Q64737"/>
<dbReference type="GuidetoPHARMACOLOGY" id="2612"/>
<dbReference type="GlyGen" id="Q64737">
    <property type="glycosylation" value="1 site, 1 O-linked glycan (1 site)"/>
</dbReference>
<dbReference type="iPTMnet" id="Q64737"/>
<dbReference type="MetOSite" id="Q64737"/>
<dbReference type="PhosphoSitePlus" id="Q64737"/>
<dbReference type="SwissPalm" id="Q64737"/>
<dbReference type="jPOST" id="Q64737"/>
<dbReference type="PaxDb" id="10090-ENSMUSP00000023684"/>
<dbReference type="PeptideAtlas" id="Q64737"/>
<dbReference type="ProteomicsDB" id="302030">
    <molecule id="Q64737-1"/>
</dbReference>
<dbReference type="ProteomicsDB" id="302031">
    <molecule id="Q64737-2"/>
</dbReference>
<dbReference type="Pumba" id="Q64737"/>
<dbReference type="Antibodypedia" id="1063">
    <property type="antibodies" value="215 antibodies from 31 providers"/>
</dbReference>
<dbReference type="DNASU" id="14450"/>
<dbReference type="Ensembl" id="ENSMUST00000023684.14">
    <molecule id="Q64737-1"/>
    <property type="protein sequence ID" value="ENSMUSP00000023684.8"/>
    <property type="gene ID" value="ENSMUSG00000022962.16"/>
</dbReference>
<dbReference type="Ensembl" id="ENSMUST00000120450.2">
    <molecule id="Q64737-2"/>
    <property type="protein sequence ID" value="ENSMUSP00000114034.2"/>
    <property type="gene ID" value="ENSMUSG00000022962.16"/>
</dbReference>
<dbReference type="Ensembl" id="ENSMUST00000231380.2">
    <molecule id="Q64737-2"/>
    <property type="protein sequence ID" value="ENSMUSP00000156232.2"/>
    <property type="gene ID" value="ENSMUSG00000022962.16"/>
</dbReference>
<dbReference type="Ensembl" id="ENSMUST00000232289.2">
    <molecule id="Q64737-1"/>
    <property type="protein sequence ID" value="ENSMUSP00000156002.2"/>
    <property type="gene ID" value="ENSMUSG00000022962.16"/>
</dbReference>
<dbReference type="GeneID" id="14450"/>
<dbReference type="KEGG" id="mmu:14450"/>
<dbReference type="UCSC" id="uc007zxu.1">
    <molecule id="Q64737-1"/>
    <property type="organism name" value="mouse"/>
</dbReference>
<dbReference type="AGR" id="MGI:95654"/>
<dbReference type="CTD" id="2618"/>
<dbReference type="MGI" id="MGI:95654">
    <property type="gene designation" value="Gart"/>
</dbReference>
<dbReference type="VEuPathDB" id="HostDB:ENSMUSG00000022962"/>
<dbReference type="eggNOG" id="KOG0237">
    <property type="taxonomic scope" value="Eukaryota"/>
</dbReference>
<dbReference type="eggNOG" id="KOG3076">
    <property type="taxonomic scope" value="Eukaryota"/>
</dbReference>
<dbReference type="GeneTree" id="ENSGT00390000000292"/>
<dbReference type="HOGENOM" id="CLU_005361_0_2_1"/>
<dbReference type="InParanoid" id="Q64737"/>
<dbReference type="OMA" id="EVMQACC"/>
<dbReference type="OrthoDB" id="2018833at2759"/>
<dbReference type="PhylomeDB" id="Q64737"/>
<dbReference type="TreeFam" id="TF106368"/>
<dbReference type="Reactome" id="R-MMU-73817">
    <property type="pathway name" value="Purine ribonucleoside monophosphate biosynthesis"/>
</dbReference>
<dbReference type="SABIO-RK" id="Q64737"/>
<dbReference type="UniPathway" id="UPA00074">
    <property type="reaction ID" value="UER00125"/>
</dbReference>
<dbReference type="UniPathway" id="UPA00074">
    <property type="reaction ID" value="UER00126"/>
</dbReference>
<dbReference type="UniPathway" id="UPA00074">
    <property type="reaction ID" value="UER00129"/>
</dbReference>
<dbReference type="BioGRID-ORCS" id="14450">
    <property type="hits" value="27 hits in 78 CRISPR screens"/>
</dbReference>
<dbReference type="ChiTaRS" id="Gart">
    <property type="organism name" value="mouse"/>
</dbReference>
<dbReference type="PRO" id="PR:Q64737"/>
<dbReference type="Proteomes" id="UP000000589">
    <property type="component" value="Chromosome 16"/>
</dbReference>
<dbReference type="RNAct" id="Q64737">
    <property type="molecule type" value="protein"/>
</dbReference>
<dbReference type="Bgee" id="ENSMUSG00000022962">
    <property type="expression patterns" value="Expressed in ileal epithelium and 292 other cell types or tissues"/>
</dbReference>
<dbReference type="ExpressionAtlas" id="Q64737">
    <property type="expression patterns" value="baseline and differential"/>
</dbReference>
<dbReference type="GO" id="GO:0005829">
    <property type="term" value="C:cytosol"/>
    <property type="evidence" value="ECO:0000314"/>
    <property type="project" value="MGI"/>
</dbReference>
<dbReference type="GO" id="GO:0005524">
    <property type="term" value="F:ATP binding"/>
    <property type="evidence" value="ECO:0007669"/>
    <property type="project" value="UniProtKB-KW"/>
</dbReference>
<dbReference type="GO" id="GO:0046872">
    <property type="term" value="F:metal ion binding"/>
    <property type="evidence" value="ECO:0007669"/>
    <property type="project" value="UniProtKB-KW"/>
</dbReference>
<dbReference type="GO" id="GO:0004637">
    <property type="term" value="F:phosphoribosylamine-glycine ligase activity"/>
    <property type="evidence" value="ECO:0000314"/>
    <property type="project" value="MGI"/>
</dbReference>
<dbReference type="GO" id="GO:0004641">
    <property type="term" value="F:phosphoribosylformylglycinamidine cyclo-ligase activity"/>
    <property type="evidence" value="ECO:0000266"/>
    <property type="project" value="MGI"/>
</dbReference>
<dbReference type="GO" id="GO:0004644">
    <property type="term" value="F:phosphoribosylglycinamide formyltransferase activity"/>
    <property type="evidence" value="ECO:0000266"/>
    <property type="project" value="MGI"/>
</dbReference>
<dbReference type="GO" id="GO:0044208">
    <property type="term" value="P:'de novo' AMP biosynthetic process"/>
    <property type="evidence" value="ECO:0000314"/>
    <property type="project" value="MGI"/>
</dbReference>
<dbReference type="GO" id="GO:0006189">
    <property type="term" value="P:'de novo' IMP biosynthetic process"/>
    <property type="evidence" value="ECO:0000314"/>
    <property type="project" value="MGI"/>
</dbReference>
<dbReference type="GO" id="GO:0097294">
    <property type="term" value="P:'de novo' XMP biosynthetic process"/>
    <property type="evidence" value="ECO:0000314"/>
    <property type="project" value="MGI"/>
</dbReference>
<dbReference type="GO" id="GO:0003360">
    <property type="term" value="P:brainstem development"/>
    <property type="evidence" value="ECO:0007669"/>
    <property type="project" value="Ensembl"/>
</dbReference>
<dbReference type="GO" id="GO:0021549">
    <property type="term" value="P:cerebellum development"/>
    <property type="evidence" value="ECO:0007669"/>
    <property type="project" value="Ensembl"/>
</dbReference>
<dbReference type="GO" id="GO:0021987">
    <property type="term" value="P:cerebral cortex development"/>
    <property type="evidence" value="ECO:0007669"/>
    <property type="project" value="Ensembl"/>
</dbReference>
<dbReference type="GO" id="GO:0006177">
    <property type="term" value="P:GMP biosynthetic process"/>
    <property type="evidence" value="ECO:0000314"/>
    <property type="project" value="MGI"/>
</dbReference>
<dbReference type="GO" id="GO:0009113">
    <property type="term" value="P:purine nucleobase biosynthetic process"/>
    <property type="evidence" value="ECO:0007669"/>
    <property type="project" value="InterPro"/>
</dbReference>
<dbReference type="CDD" id="cd08645">
    <property type="entry name" value="FMT_core_GART"/>
    <property type="match status" value="1"/>
</dbReference>
<dbReference type="CDD" id="cd02196">
    <property type="entry name" value="PurM"/>
    <property type="match status" value="1"/>
</dbReference>
<dbReference type="FunFam" id="3.40.50.20:FF:000006">
    <property type="entry name" value="Phosphoribosylamine--glycine ligase, chloroplastic"/>
    <property type="match status" value="1"/>
</dbReference>
<dbReference type="FunFam" id="3.30.1490.20:FF:000006">
    <property type="entry name" value="phosphoribosylamine--glycine ligase, chloroplastic-like"/>
    <property type="match status" value="1"/>
</dbReference>
<dbReference type="FunFam" id="3.30.1330.10:FF:000001">
    <property type="entry name" value="Phosphoribosylformylglycinamidine cyclo-ligase"/>
    <property type="match status" value="1"/>
</dbReference>
<dbReference type="FunFam" id="3.30.470.20:FF:000018">
    <property type="entry name" value="Trifunctional purine biosynthetic protein adenosine-3"/>
    <property type="match status" value="1"/>
</dbReference>
<dbReference type="FunFam" id="3.40.50.170:FF:000006">
    <property type="entry name" value="Trifunctional purine biosynthetic protein adenosine-3"/>
    <property type="match status" value="1"/>
</dbReference>
<dbReference type="FunFam" id="3.90.600.10:FF:000001">
    <property type="entry name" value="Trifunctional purine biosynthetic protein adenosine-3"/>
    <property type="match status" value="1"/>
</dbReference>
<dbReference type="FunFam" id="3.90.650.10:FF:000007">
    <property type="entry name" value="Trifunctional purine biosynthetic protein adenosine-3"/>
    <property type="match status" value="1"/>
</dbReference>
<dbReference type="Gene3D" id="3.40.50.20">
    <property type="match status" value="1"/>
</dbReference>
<dbReference type="Gene3D" id="3.30.1490.20">
    <property type="entry name" value="ATP-grasp fold, A domain"/>
    <property type="match status" value="1"/>
</dbReference>
<dbReference type="Gene3D" id="3.30.470.20">
    <property type="entry name" value="ATP-grasp fold, B domain"/>
    <property type="match status" value="1"/>
</dbReference>
<dbReference type="Gene3D" id="3.40.50.170">
    <property type="entry name" value="Formyl transferase, N-terminal domain"/>
    <property type="match status" value="1"/>
</dbReference>
<dbReference type="Gene3D" id="3.90.600.10">
    <property type="entry name" value="Phosphoribosylglycinamide synthetase, C-terminal domain"/>
    <property type="match status" value="1"/>
</dbReference>
<dbReference type="Gene3D" id="3.90.650.10">
    <property type="entry name" value="PurM-like C-terminal domain"/>
    <property type="match status" value="1"/>
</dbReference>
<dbReference type="Gene3D" id="3.30.1330.10">
    <property type="entry name" value="PurM-like, N-terminal domain"/>
    <property type="match status" value="1"/>
</dbReference>
<dbReference type="HAMAP" id="MF_00741">
    <property type="entry name" value="AIRS"/>
    <property type="match status" value="1"/>
</dbReference>
<dbReference type="HAMAP" id="MF_00138">
    <property type="entry name" value="GARS"/>
    <property type="match status" value="1"/>
</dbReference>
<dbReference type="HAMAP" id="MF_01930">
    <property type="entry name" value="PurN"/>
    <property type="match status" value="1"/>
</dbReference>
<dbReference type="InterPro" id="IPR011761">
    <property type="entry name" value="ATP-grasp"/>
</dbReference>
<dbReference type="InterPro" id="IPR013815">
    <property type="entry name" value="ATP_grasp_subdomain_1"/>
</dbReference>
<dbReference type="InterPro" id="IPR002376">
    <property type="entry name" value="Formyl_transf_N"/>
</dbReference>
<dbReference type="InterPro" id="IPR036477">
    <property type="entry name" value="Formyl_transf_N_sf"/>
</dbReference>
<dbReference type="InterPro" id="IPR004607">
    <property type="entry name" value="GART"/>
</dbReference>
<dbReference type="InterPro" id="IPR001555">
    <property type="entry name" value="GART_AS"/>
</dbReference>
<dbReference type="InterPro" id="IPR016185">
    <property type="entry name" value="PreATP-grasp_dom_sf"/>
</dbReference>
<dbReference type="InterPro" id="IPR020561">
    <property type="entry name" value="PRibGlycinamid_synth_ATP-grasp"/>
</dbReference>
<dbReference type="InterPro" id="IPR000115">
    <property type="entry name" value="PRibGlycinamide_synth"/>
</dbReference>
<dbReference type="InterPro" id="IPR020560">
    <property type="entry name" value="PRibGlycinamide_synth_C-dom"/>
</dbReference>
<dbReference type="InterPro" id="IPR037123">
    <property type="entry name" value="PRibGlycinamide_synth_C_sf"/>
</dbReference>
<dbReference type="InterPro" id="IPR020559">
    <property type="entry name" value="PRibGlycinamide_synth_CS"/>
</dbReference>
<dbReference type="InterPro" id="IPR020562">
    <property type="entry name" value="PRibGlycinamide_synth_N"/>
</dbReference>
<dbReference type="InterPro" id="IPR010918">
    <property type="entry name" value="PurM-like_C_dom"/>
</dbReference>
<dbReference type="InterPro" id="IPR036676">
    <property type="entry name" value="PurM-like_C_sf"/>
</dbReference>
<dbReference type="InterPro" id="IPR016188">
    <property type="entry name" value="PurM-like_N"/>
</dbReference>
<dbReference type="InterPro" id="IPR036921">
    <property type="entry name" value="PurM-like_N_sf"/>
</dbReference>
<dbReference type="InterPro" id="IPR004733">
    <property type="entry name" value="PurM_cligase"/>
</dbReference>
<dbReference type="InterPro" id="IPR011054">
    <property type="entry name" value="Rudment_hybrid_motif"/>
</dbReference>
<dbReference type="NCBIfam" id="TIGR00877">
    <property type="entry name" value="purD"/>
    <property type="match status" value="1"/>
</dbReference>
<dbReference type="NCBIfam" id="TIGR00878">
    <property type="entry name" value="purM"/>
    <property type="match status" value="1"/>
</dbReference>
<dbReference type="NCBIfam" id="TIGR00639">
    <property type="entry name" value="PurN"/>
    <property type="match status" value="1"/>
</dbReference>
<dbReference type="PANTHER" id="PTHR10520:SF12">
    <property type="entry name" value="TRIFUNCTIONAL PURINE BIOSYNTHETIC PROTEIN ADENOSINE-3"/>
    <property type="match status" value="1"/>
</dbReference>
<dbReference type="PANTHER" id="PTHR10520">
    <property type="entry name" value="TRIFUNCTIONAL PURINE BIOSYNTHETIC PROTEIN ADENOSINE-3-RELATED"/>
    <property type="match status" value="1"/>
</dbReference>
<dbReference type="Pfam" id="PF00586">
    <property type="entry name" value="AIRS"/>
    <property type="match status" value="1"/>
</dbReference>
<dbReference type="Pfam" id="PF02769">
    <property type="entry name" value="AIRS_C"/>
    <property type="match status" value="1"/>
</dbReference>
<dbReference type="Pfam" id="PF00551">
    <property type="entry name" value="Formyl_trans_N"/>
    <property type="match status" value="1"/>
</dbReference>
<dbReference type="Pfam" id="PF01071">
    <property type="entry name" value="GARS_A"/>
    <property type="match status" value="1"/>
</dbReference>
<dbReference type="Pfam" id="PF02843">
    <property type="entry name" value="GARS_C"/>
    <property type="match status" value="1"/>
</dbReference>
<dbReference type="Pfam" id="PF02844">
    <property type="entry name" value="GARS_N"/>
    <property type="match status" value="1"/>
</dbReference>
<dbReference type="SMART" id="SM01209">
    <property type="entry name" value="GARS_A"/>
    <property type="match status" value="1"/>
</dbReference>
<dbReference type="SMART" id="SM01210">
    <property type="entry name" value="GARS_C"/>
    <property type="match status" value="1"/>
</dbReference>
<dbReference type="SUPFAM" id="SSF53328">
    <property type="entry name" value="Formyltransferase"/>
    <property type="match status" value="1"/>
</dbReference>
<dbReference type="SUPFAM" id="SSF56059">
    <property type="entry name" value="Glutathione synthetase ATP-binding domain-like"/>
    <property type="match status" value="1"/>
</dbReference>
<dbReference type="SUPFAM" id="SSF52440">
    <property type="entry name" value="PreATP-grasp domain"/>
    <property type="match status" value="1"/>
</dbReference>
<dbReference type="SUPFAM" id="SSF56042">
    <property type="entry name" value="PurM C-terminal domain-like"/>
    <property type="match status" value="1"/>
</dbReference>
<dbReference type="SUPFAM" id="SSF55326">
    <property type="entry name" value="PurM N-terminal domain-like"/>
    <property type="match status" value="1"/>
</dbReference>
<dbReference type="SUPFAM" id="SSF51246">
    <property type="entry name" value="Rudiment single hybrid motif"/>
    <property type="match status" value="1"/>
</dbReference>
<dbReference type="PROSITE" id="PS50975">
    <property type="entry name" value="ATP_GRASP"/>
    <property type="match status" value="1"/>
</dbReference>
<dbReference type="PROSITE" id="PS00184">
    <property type="entry name" value="GARS"/>
    <property type="match status" value="1"/>
</dbReference>
<dbReference type="PROSITE" id="PS00373">
    <property type="entry name" value="GART"/>
    <property type="match status" value="1"/>
</dbReference>
<name>PUR2_MOUSE</name>